<proteinExistence type="evidence at transcript level"/>
<gene>
    <name type="primary">PRM1</name>
</gene>
<accession>Q71V19</accession>
<sequence length="63" mass="8697">MARYRRHSRSRSRSRYRRRRRRRSRHHNRRRTYRRSRRHSRRRRGRRRGYSRRRYSRRGRRRY</sequence>
<name>HSP1_ANTMI</name>
<organism>
    <name type="scientific">Antechinus minimus</name>
    <name type="common">Swamp antechinus</name>
    <dbReference type="NCBI Taxonomy" id="71386"/>
    <lineage>
        <taxon>Eukaryota</taxon>
        <taxon>Metazoa</taxon>
        <taxon>Chordata</taxon>
        <taxon>Craniata</taxon>
        <taxon>Vertebrata</taxon>
        <taxon>Euteleostomi</taxon>
        <taxon>Mammalia</taxon>
        <taxon>Metatheria</taxon>
        <taxon>Dasyuromorphia</taxon>
        <taxon>Dasyuridae</taxon>
        <taxon>Antechinus</taxon>
    </lineage>
</organism>
<feature type="chain" id="PRO_0000191446" description="Sperm protamine P1">
    <location>
        <begin position="1"/>
        <end position="63"/>
    </location>
</feature>
<feature type="region of interest" description="Disordered" evidence="2">
    <location>
        <begin position="1"/>
        <end position="63"/>
    </location>
</feature>
<evidence type="ECO:0000250" key="1"/>
<evidence type="ECO:0000256" key="2">
    <source>
        <dbReference type="SAM" id="MobiDB-lite"/>
    </source>
</evidence>
<evidence type="ECO:0000305" key="3"/>
<reference key="1">
    <citation type="journal article" date="1998" name="J. Mammal.">
        <title>Phylogeny of the dasyurid marsupial genus Antechinus based on cytochrome-b, 12S-rRNA, and protamine-P1 genes.</title>
        <authorList>
            <person name="Armstrong L.A."/>
            <person name="Krajewski C."/>
            <person name="Westerman M."/>
        </authorList>
    </citation>
    <scope>NUCLEOTIDE SEQUENCE [GENOMIC DNA]</scope>
</reference>
<protein>
    <recommendedName>
        <fullName>Sperm protamine P1</fullName>
    </recommendedName>
</protein>
<keyword id="KW-0158">Chromosome</keyword>
<keyword id="KW-0217">Developmental protein</keyword>
<keyword id="KW-0221">Differentiation</keyword>
<keyword id="KW-0226">DNA condensation</keyword>
<keyword id="KW-0238">DNA-binding</keyword>
<keyword id="KW-0544">Nucleosome core</keyword>
<keyword id="KW-0539">Nucleus</keyword>
<keyword id="KW-0744">Spermatogenesis</keyword>
<comment type="function">
    <text evidence="1">Protamines substitute for histones in the chromatin of sperm during the haploid phase of spermatogenesis. They compact sperm DNA into a highly condensed, stable and inactive complex (By similarity).</text>
</comment>
<comment type="subcellular location">
    <subcellularLocation>
        <location evidence="1">Nucleus</location>
    </subcellularLocation>
    <subcellularLocation>
        <location evidence="1">Chromosome</location>
    </subcellularLocation>
</comment>
<comment type="tissue specificity">
    <text>Testis.</text>
</comment>
<comment type="similarity">
    <text evidence="3">Belongs to the protamine P1 family.</text>
</comment>
<dbReference type="EMBL" id="AF038294">
    <property type="protein sequence ID" value="AAC15621.1"/>
    <property type="molecule type" value="Genomic_DNA"/>
</dbReference>
<dbReference type="GO" id="GO:0000786">
    <property type="term" value="C:nucleosome"/>
    <property type="evidence" value="ECO:0007669"/>
    <property type="project" value="UniProtKB-KW"/>
</dbReference>
<dbReference type="GO" id="GO:0005634">
    <property type="term" value="C:nucleus"/>
    <property type="evidence" value="ECO:0007669"/>
    <property type="project" value="UniProtKB-SubCell"/>
</dbReference>
<dbReference type="GO" id="GO:0003677">
    <property type="term" value="F:DNA binding"/>
    <property type="evidence" value="ECO:0007669"/>
    <property type="project" value="UniProtKB-KW"/>
</dbReference>
<dbReference type="GO" id="GO:0030261">
    <property type="term" value="P:chromosome condensation"/>
    <property type="evidence" value="ECO:0007669"/>
    <property type="project" value="UniProtKB-KW"/>
</dbReference>
<dbReference type="GO" id="GO:0035092">
    <property type="term" value="P:sperm DNA condensation"/>
    <property type="evidence" value="ECO:0007669"/>
    <property type="project" value="InterPro"/>
</dbReference>
<dbReference type="InterPro" id="IPR000221">
    <property type="entry name" value="Protamine_P1"/>
</dbReference>
<dbReference type="PROSITE" id="PS00048">
    <property type="entry name" value="PROTAMINE_P1"/>
    <property type="match status" value="1"/>
</dbReference>